<evidence type="ECO:0000250" key="1">
    <source>
        <dbReference type="UniProtKB" id="P76249"/>
    </source>
</evidence>
<evidence type="ECO:0000255" key="2"/>
<evidence type="ECO:0000305" key="3"/>
<proteinExistence type="uncertain"/>
<dbReference type="EMBL" id="CP000036">
    <property type="protein sequence ID" value="ABB65920.1"/>
    <property type="status" value="ALT_SEQ"/>
    <property type="molecule type" value="Genomic_DNA"/>
</dbReference>
<dbReference type="EMBL" id="CP000036">
    <property type="protein sequence ID" value="ABB65922.1"/>
    <property type="status" value="ALT_SEQ"/>
    <property type="molecule type" value="Genomic_DNA"/>
</dbReference>
<dbReference type="KEGG" id="sbo:SBO_1292"/>
<dbReference type="KEGG" id="sbo:SBO_1294"/>
<dbReference type="HOGENOM" id="CLU_079569_5_1_6"/>
<dbReference type="Proteomes" id="UP000007067">
    <property type="component" value="Chromosome"/>
</dbReference>
<dbReference type="GO" id="GO:0005886">
    <property type="term" value="C:plasma membrane"/>
    <property type="evidence" value="ECO:0007669"/>
    <property type="project" value="UniProtKB-SubCell"/>
</dbReference>
<dbReference type="GO" id="GO:0015297">
    <property type="term" value="F:antiporter activity"/>
    <property type="evidence" value="ECO:0007669"/>
    <property type="project" value="UniProtKB-KW"/>
</dbReference>
<dbReference type="GO" id="GO:0015190">
    <property type="term" value="F:L-leucine transmembrane transporter activity"/>
    <property type="evidence" value="ECO:0007669"/>
    <property type="project" value="TreeGrafter"/>
</dbReference>
<dbReference type="GO" id="GO:0015820">
    <property type="term" value="P:L-leucine transport"/>
    <property type="evidence" value="ECO:0007669"/>
    <property type="project" value="TreeGrafter"/>
</dbReference>
<dbReference type="InterPro" id="IPR001123">
    <property type="entry name" value="LeuE-type"/>
</dbReference>
<dbReference type="NCBIfam" id="NF008201">
    <property type="entry name" value="PRK10958.1"/>
    <property type="match status" value="1"/>
</dbReference>
<dbReference type="PANTHER" id="PTHR30086">
    <property type="entry name" value="ARGININE EXPORTER PROTEIN ARGO"/>
    <property type="match status" value="1"/>
</dbReference>
<dbReference type="PANTHER" id="PTHR30086:SF15">
    <property type="entry name" value="LEUCINE EFFLUX PROTEIN"/>
    <property type="match status" value="1"/>
</dbReference>
<dbReference type="Pfam" id="PF01810">
    <property type="entry name" value="LysE"/>
    <property type="match status" value="1"/>
</dbReference>
<dbReference type="PIRSF" id="PIRSF006324">
    <property type="entry name" value="LeuE"/>
    <property type="match status" value="1"/>
</dbReference>
<sequence length="191" mass="20896">MVPGPNTLFVLKNSVSSGMKGGYLAACGVFIGDAVLMFLAWAGVATLIKTTPILFNIVRYLGAFYLLYLESKILYATLKGKNNEAKSDEPQYGAIFKRALILSLTNPKAILFYVSFFVQFIDVNAPHTGISFFILATTLELVSFCYLSFLIISGAFVTQYIRTKKKLAKVGNSLIGLMFVGFAARLATLQS</sequence>
<accession>Q321T8</accession>
<accession>Q321T6</accession>
<reference key="1">
    <citation type="journal article" date="2005" name="Nucleic Acids Res.">
        <title>Genome dynamics and diversity of Shigella species, the etiologic agents of bacillary dysentery.</title>
        <authorList>
            <person name="Yang F."/>
            <person name="Yang J."/>
            <person name="Zhang X."/>
            <person name="Chen L."/>
            <person name="Jiang Y."/>
            <person name="Yan Y."/>
            <person name="Tang X."/>
            <person name="Wang J."/>
            <person name="Xiong Z."/>
            <person name="Dong J."/>
            <person name="Xue Y."/>
            <person name="Zhu Y."/>
            <person name="Xu X."/>
            <person name="Sun L."/>
            <person name="Chen S."/>
            <person name="Nie H."/>
            <person name="Peng J."/>
            <person name="Xu J."/>
            <person name="Wang Y."/>
            <person name="Yuan Z."/>
            <person name="Wen Y."/>
            <person name="Yao Z."/>
            <person name="Shen Y."/>
            <person name="Qiang B."/>
            <person name="Hou Y."/>
            <person name="Yu J."/>
            <person name="Jin Q."/>
        </authorList>
    </citation>
    <scope>NUCLEOTIDE SEQUENCE [LARGE SCALE GENOMIC DNA]</scope>
    <source>
        <strain>Sb227</strain>
    </source>
</reference>
<feature type="chain" id="PRO_0000316810" description="Putative leucine efflux protein">
    <location>
        <begin position="1"/>
        <end position="191"/>
    </location>
</feature>
<feature type="transmembrane region" description="Helical" evidence="2">
    <location>
        <begin position="28"/>
        <end position="48"/>
    </location>
</feature>
<feature type="transmembrane region" description="Helical" evidence="2">
    <location>
        <begin position="50"/>
        <end position="70"/>
    </location>
</feature>
<feature type="transmembrane region" description="Helical" evidence="2">
    <location>
        <begin position="101"/>
        <end position="121"/>
    </location>
</feature>
<feature type="transmembrane region" description="Helical" evidence="2">
    <location>
        <begin position="132"/>
        <end position="152"/>
    </location>
</feature>
<feature type="transmembrane region" description="Helical" evidence="2">
    <location>
        <begin position="167"/>
        <end position="187"/>
    </location>
</feature>
<organism>
    <name type="scientific">Shigella boydii serotype 4 (strain Sb227)</name>
    <dbReference type="NCBI Taxonomy" id="300268"/>
    <lineage>
        <taxon>Bacteria</taxon>
        <taxon>Pseudomonadati</taxon>
        <taxon>Pseudomonadota</taxon>
        <taxon>Gammaproteobacteria</taxon>
        <taxon>Enterobacterales</taxon>
        <taxon>Enterobacteriaceae</taxon>
        <taxon>Shigella</taxon>
    </lineage>
</organism>
<gene>
    <name type="primary">leuE</name>
    <name type="ordered locus">SBO_1292/SBO_1294</name>
</gene>
<keyword id="KW-0029">Amino-acid transport</keyword>
<keyword id="KW-0050">Antiport</keyword>
<keyword id="KW-0997">Cell inner membrane</keyword>
<keyword id="KW-1003">Cell membrane</keyword>
<keyword id="KW-0472">Membrane</keyword>
<keyword id="KW-0812">Transmembrane</keyword>
<keyword id="KW-1133">Transmembrane helix</keyword>
<keyword id="KW-0813">Transport</keyword>
<protein>
    <recommendedName>
        <fullName evidence="1">Putative leucine efflux protein</fullName>
    </recommendedName>
</protein>
<comment type="function">
    <text evidence="1">Exporter of leucine.</text>
</comment>
<comment type="catalytic activity">
    <reaction evidence="1">
        <text>L-leucine(in) + H(+)(out) = L-leucine(out) + H(+)(in)</text>
        <dbReference type="Rhea" id="RHEA:28731"/>
        <dbReference type="ChEBI" id="CHEBI:15378"/>
        <dbReference type="ChEBI" id="CHEBI:57427"/>
    </reaction>
    <physiologicalReaction direction="left-to-right" evidence="1">
        <dbReference type="Rhea" id="RHEA:28732"/>
    </physiologicalReaction>
</comment>
<comment type="subcellular location">
    <subcellularLocation>
        <location evidence="1">Cell inner membrane</location>
        <topology evidence="2">Multi-pass membrane protein</topology>
    </subcellularLocation>
</comment>
<comment type="similarity">
    <text evidence="3">Belongs to the Rht family.</text>
</comment>
<comment type="caution">
    <text evidence="3">Could be the product of a pseudogene. The gene coding for this protein is interrupted by a IS1 element between amino acids 114 and 115. The N-terminus is shorter than orthologs.</text>
</comment>
<name>LEUE_SHIBS</name>